<evidence type="ECO:0000255" key="1">
    <source>
        <dbReference type="HAMAP-Rule" id="MF_01813"/>
    </source>
</evidence>
<proteinExistence type="inferred from homology"/>
<accession>A6VDI6</accession>
<name>UBIE_PSEP7</name>
<keyword id="KW-0474">Menaquinone biosynthesis</keyword>
<keyword id="KW-0489">Methyltransferase</keyword>
<keyword id="KW-0949">S-adenosyl-L-methionine</keyword>
<keyword id="KW-0808">Transferase</keyword>
<keyword id="KW-0831">Ubiquinone biosynthesis</keyword>
<reference key="1">
    <citation type="submission" date="2007-06" db="EMBL/GenBank/DDBJ databases">
        <authorList>
            <person name="Dodson R.J."/>
            <person name="Harkins D."/>
            <person name="Paulsen I.T."/>
        </authorList>
    </citation>
    <scope>NUCLEOTIDE SEQUENCE [LARGE SCALE GENOMIC DNA]</scope>
    <source>
        <strain>DSM 24068 / PA7</strain>
    </source>
</reference>
<comment type="function">
    <text evidence="1">Methyltransferase required for the conversion of demethylmenaquinol (DMKH2) to menaquinol (MKH2) and the conversion of 2-polyprenyl-6-methoxy-1,4-benzoquinol (DDMQH2) to 2-polyprenyl-3-methyl-6-methoxy-1,4-benzoquinol (DMQH2).</text>
</comment>
<comment type="catalytic activity">
    <reaction evidence="1">
        <text>a 2-demethylmenaquinol + S-adenosyl-L-methionine = a menaquinol + S-adenosyl-L-homocysteine + H(+)</text>
        <dbReference type="Rhea" id="RHEA:42640"/>
        <dbReference type="Rhea" id="RHEA-COMP:9539"/>
        <dbReference type="Rhea" id="RHEA-COMP:9563"/>
        <dbReference type="ChEBI" id="CHEBI:15378"/>
        <dbReference type="ChEBI" id="CHEBI:18151"/>
        <dbReference type="ChEBI" id="CHEBI:55437"/>
        <dbReference type="ChEBI" id="CHEBI:57856"/>
        <dbReference type="ChEBI" id="CHEBI:59789"/>
        <dbReference type="EC" id="2.1.1.163"/>
    </reaction>
</comment>
<comment type="catalytic activity">
    <reaction evidence="1">
        <text>a 2-methoxy-6-(all-trans-polyprenyl)benzene-1,4-diol + S-adenosyl-L-methionine = a 5-methoxy-2-methyl-3-(all-trans-polyprenyl)benzene-1,4-diol + S-adenosyl-L-homocysteine + H(+)</text>
        <dbReference type="Rhea" id="RHEA:28286"/>
        <dbReference type="Rhea" id="RHEA-COMP:10858"/>
        <dbReference type="Rhea" id="RHEA-COMP:10859"/>
        <dbReference type="ChEBI" id="CHEBI:15378"/>
        <dbReference type="ChEBI" id="CHEBI:57856"/>
        <dbReference type="ChEBI" id="CHEBI:59789"/>
        <dbReference type="ChEBI" id="CHEBI:84166"/>
        <dbReference type="ChEBI" id="CHEBI:84167"/>
        <dbReference type="EC" id="2.1.1.201"/>
    </reaction>
</comment>
<comment type="pathway">
    <text evidence="1">Quinol/quinone metabolism; menaquinone biosynthesis; menaquinol from 1,4-dihydroxy-2-naphthoate: step 2/2.</text>
</comment>
<comment type="pathway">
    <text evidence="1">Cofactor biosynthesis; ubiquinone biosynthesis.</text>
</comment>
<comment type="similarity">
    <text evidence="1">Belongs to the class I-like SAM-binding methyltransferase superfamily. MenG/UbiE family.</text>
</comment>
<gene>
    <name evidence="1" type="primary">ubiE</name>
    <name type="ordered locus">PSPA7_5802</name>
</gene>
<protein>
    <recommendedName>
        <fullName evidence="1">Ubiquinone/menaquinone biosynthesis C-methyltransferase UbiE</fullName>
        <ecNumber evidence="1">2.1.1.163</ecNumber>
        <ecNumber evidence="1">2.1.1.201</ecNumber>
    </recommendedName>
    <alternativeName>
        <fullName evidence="1">2-methoxy-6-polyprenyl-1,4-benzoquinol methylase</fullName>
    </alternativeName>
    <alternativeName>
        <fullName evidence="1">Demethylmenaquinone methyltransferase</fullName>
    </alternativeName>
</protein>
<organism>
    <name type="scientific">Pseudomonas paraeruginosa (strain DSM 24068 / PA7)</name>
    <name type="common">Pseudomonas aeruginosa (strain PA7)</name>
    <dbReference type="NCBI Taxonomy" id="381754"/>
    <lineage>
        <taxon>Bacteria</taxon>
        <taxon>Pseudomonadati</taxon>
        <taxon>Pseudomonadota</taxon>
        <taxon>Gammaproteobacteria</taxon>
        <taxon>Pseudomonadales</taxon>
        <taxon>Pseudomonadaceae</taxon>
        <taxon>Pseudomonas</taxon>
        <taxon>Pseudomonas paraeruginosa</taxon>
    </lineage>
</organism>
<sequence>MNDPRKGADAEPTTHFGYQNVPESQKAKKVAEVFHSVAAKYDLMNDLMSGGIHRLWKRFTIELSGVRSGNRVLDIAGGTGDLTRQFSRLVGPSGEVVLADINASMLKVGRDKLLDKGVSGNVSFVQADAEKLPFPDNHFDCVTIAFGLRNVTHKDEAIRSMLRVLKPGGRLLVLEFSKPSSSLLSKAYDAYSFSLLPLMGKLVTNDAESYRYLAESIRMHPDQETLKAMMVEAGFDRVTYHNMTGGIVALHRGIKP</sequence>
<feature type="chain" id="PRO_1000056271" description="Ubiquinone/menaquinone biosynthesis C-methyltransferase UbiE">
    <location>
        <begin position="1"/>
        <end position="256"/>
    </location>
</feature>
<feature type="binding site" evidence="1">
    <location>
        <position position="79"/>
    </location>
    <ligand>
        <name>S-adenosyl-L-methionine</name>
        <dbReference type="ChEBI" id="CHEBI:59789"/>
    </ligand>
</feature>
<feature type="binding site" evidence="1">
    <location>
        <position position="100"/>
    </location>
    <ligand>
        <name>S-adenosyl-L-methionine</name>
        <dbReference type="ChEBI" id="CHEBI:59789"/>
    </ligand>
</feature>
<feature type="binding site" evidence="1">
    <location>
        <begin position="128"/>
        <end position="129"/>
    </location>
    <ligand>
        <name>S-adenosyl-L-methionine</name>
        <dbReference type="ChEBI" id="CHEBI:59789"/>
    </ligand>
</feature>
<dbReference type="EC" id="2.1.1.163" evidence="1"/>
<dbReference type="EC" id="2.1.1.201" evidence="1"/>
<dbReference type="EMBL" id="CP000744">
    <property type="protein sequence ID" value="ABR84835.1"/>
    <property type="molecule type" value="Genomic_DNA"/>
</dbReference>
<dbReference type="RefSeq" id="WP_003155129.1">
    <property type="nucleotide sequence ID" value="NC_009656.1"/>
</dbReference>
<dbReference type="SMR" id="A6VDI6"/>
<dbReference type="KEGG" id="pap:PSPA7_5802"/>
<dbReference type="HOGENOM" id="CLU_037990_0_0_6"/>
<dbReference type="UniPathway" id="UPA00079">
    <property type="reaction ID" value="UER00169"/>
</dbReference>
<dbReference type="UniPathway" id="UPA00232"/>
<dbReference type="Proteomes" id="UP000001582">
    <property type="component" value="Chromosome"/>
</dbReference>
<dbReference type="GO" id="GO:0008425">
    <property type="term" value="F:2-methoxy-6-polyprenyl-1,4-benzoquinol methyltransferase activity"/>
    <property type="evidence" value="ECO:0007669"/>
    <property type="project" value="UniProtKB-UniRule"/>
</dbReference>
<dbReference type="GO" id="GO:0043770">
    <property type="term" value="F:demethylmenaquinone methyltransferase activity"/>
    <property type="evidence" value="ECO:0007669"/>
    <property type="project" value="UniProtKB-UniRule"/>
</dbReference>
<dbReference type="GO" id="GO:0009060">
    <property type="term" value="P:aerobic respiration"/>
    <property type="evidence" value="ECO:0007669"/>
    <property type="project" value="UniProtKB-UniRule"/>
</dbReference>
<dbReference type="GO" id="GO:0009234">
    <property type="term" value="P:menaquinone biosynthetic process"/>
    <property type="evidence" value="ECO:0007669"/>
    <property type="project" value="UniProtKB-UniRule"/>
</dbReference>
<dbReference type="GO" id="GO:0032259">
    <property type="term" value="P:methylation"/>
    <property type="evidence" value="ECO:0007669"/>
    <property type="project" value="UniProtKB-KW"/>
</dbReference>
<dbReference type="CDD" id="cd02440">
    <property type="entry name" value="AdoMet_MTases"/>
    <property type="match status" value="1"/>
</dbReference>
<dbReference type="FunFam" id="3.40.50.150:FF:000014">
    <property type="entry name" value="Ubiquinone/menaquinone biosynthesis C-methyltransferase UbiE"/>
    <property type="match status" value="1"/>
</dbReference>
<dbReference type="Gene3D" id="3.40.50.150">
    <property type="entry name" value="Vaccinia Virus protein VP39"/>
    <property type="match status" value="1"/>
</dbReference>
<dbReference type="HAMAP" id="MF_01813">
    <property type="entry name" value="MenG_UbiE_methyltr"/>
    <property type="match status" value="1"/>
</dbReference>
<dbReference type="InterPro" id="IPR029063">
    <property type="entry name" value="SAM-dependent_MTases_sf"/>
</dbReference>
<dbReference type="InterPro" id="IPR004033">
    <property type="entry name" value="UbiE/COQ5_MeTrFase"/>
</dbReference>
<dbReference type="InterPro" id="IPR023576">
    <property type="entry name" value="UbiE/COQ5_MeTrFase_CS"/>
</dbReference>
<dbReference type="NCBIfam" id="TIGR01934">
    <property type="entry name" value="MenG_MenH_UbiE"/>
    <property type="match status" value="1"/>
</dbReference>
<dbReference type="NCBIfam" id="NF001240">
    <property type="entry name" value="PRK00216.1-1"/>
    <property type="match status" value="1"/>
</dbReference>
<dbReference type="NCBIfam" id="NF001244">
    <property type="entry name" value="PRK00216.1-5"/>
    <property type="match status" value="1"/>
</dbReference>
<dbReference type="PANTHER" id="PTHR43591:SF24">
    <property type="entry name" value="2-METHOXY-6-POLYPRENYL-1,4-BENZOQUINOL METHYLASE, MITOCHONDRIAL"/>
    <property type="match status" value="1"/>
</dbReference>
<dbReference type="PANTHER" id="PTHR43591">
    <property type="entry name" value="METHYLTRANSFERASE"/>
    <property type="match status" value="1"/>
</dbReference>
<dbReference type="Pfam" id="PF01209">
    <property type="entry name" value="Ubie_methyltran"/>
    <property type="match status" value="1"/>
</dbReference>
<dbReference type="SUPFAM" id="SSF53335">
    <property type="entry name" value="S-adenosyl-L-methionine-dependent methyltransferases"/>
    <property type="match status" value="1"/>
</dbReference>
<dbReference type="PROSITE" id="PS51608">
    <property type="entry name" value="SAM_MT_UBIE"/>
    <property type="match status" value="1"/>
</dbReference>
<dbReference type="PROSITE" id="PS01183">
    <property type="entry name" value="UBIE_1"/>
    <property type="match status" value="1"/>
</dbReference>
<dbReference type="PROSITE" id="PS01184">
    <property type="entry name" value="UBIE_2"/>
    <property type="match status" value="1"/>
</dbReference>